<protein>
    <recommendedName>
        <fullName evidence="1">Aspartate--tRNA ligase</fullName>
        <ecNumber evidence="1">6.1.1.12</ecNumber>
    </recommendedName>
    <alternativeName>
        <fullName evidence="1">Aspartyl-tRNA synthetase</fullName>
        <shortName evidence="1">AspRS</shortName>
    </alternativeName>
</protein>
<comment type="function">
    <text evidence="1">Catalyzes the attachment of L-aspartate to tRNA(Asp) in a two-step reaction: L-aspartate is first activated by ATP to form Asp-AMP and then transferred to the acceptor end of tRNA(Asp).</text>
</comment>
<comment type="catalytic activity">
    <reaction evidence="1">
        <text>tRNA(Asp) + L-aspartate + ATP = L-aspartyl-tRNA(Asp) + AMP + diphosphate</text>
        <dbReference type="Rhea" id="RHEA:19649"/>
        <dbReference type="Rhea" id="RHEA-COMP:9660"/>
        <dbReference type="Rhea" id="RHEA-COMP:9678"/>
        <dbReference type="ChEBI" id="CHEBI:29991"/>
        <dbReference type="ChEBI" id="CHEBI:30616"/>
        <dbReference type="ChEBI" id="CHEBI:33019"/>
        <dbReference type="ChEBI" id="CHEBI:78442"/>
        <dbReference type="ChEBI" id="CHEBI:78516"/>
        <dbReference type="ChEBI" id="CHEBI:456215"/>
        <dbReference type="EC" id="6.1.1.12"/>
    </reaction>
</comment>
<comment type="subunit">
    <text evidence="1">Homodimer.</text>
</comment>
<comment type="subcellular location">
    <subcellularLocation>
        <location evidence="1">Cytoplasm</location>
    </subcellularLocation>
</comment>
<comment type="similarity">
    <text evidence="1">Belongs to the class-II aminoacyl-tRNA synthetase family. Type 1 subfamily.</text>
</comment>
<sequence length="577" mass="64195">MQRTCYIGELNASLVGQTVILQGWANRRRDLGGLIFIELRDRSGSIQVEVEPDSPAFHEADTVRAEYVLEVEGRFQPRPEEQRKGGLADYEVIALRVTVLSAAKTPPFELDKGESVAEDIRLKYRYLDLRRPEMQRHLMLRSRAVAAATAFLDAEGFVQVETPMLTRSTPEGARDFLVPSRLNPGEFYALPQSPQLFKQLLMIAGFDRYYQFARCFRDEDLRADRQPDFTQLDMEMSFVTQEDVLDVQERLLAHVFRTVLDYELPLPFPRLSYQEAMDRYGSDKPDLRFDRAFADVTDLFRGGEFGAFADAETVKVLAAPALTRKQLDELERVAKQNGAKGLAWARREGDGLTGGISRFLGEQAAALLERTGVEPGGTLLFSAGEWKKAVTALGAVRLALRDLFDLAAGGPRFQVAWVLDFPQLEFDEEAGSWTYMHHPFTAPRPEDIPLFGTERQGEIRAQAYDLVLNGFEVGGGSIRIHDPAVQTQMFQAIGLSEAEAREKFGFFLDALSYGTPPHGGIAWGFDRLVMVMAGASSIREVIAFPKNNRGVDLMAGAPSPVSPAQLAEVGVAVTTES</sequence>
<proteinExistence type="inferred from homology"/>
<dbReference type="EC" id="6.1.1.12" evidence="1"/>
<dbReference type="EMBL" id="CP000359">
    <property type="protein sequence ID" value="ABF45420.1"/>
    <property type="molecule type" value="Genomic_DNA"/>
</dbReference>
<dbReference type="RefSeq" id="WP_011530257.1">
    <property type="nucleotide sequence ID" value="NC_008025.1"/>
</dbReference>
<dbReference type="SMR" id="Q1IZB4"/>
<dbReference type="STRING" id="319795.Dgeo_1122"/>
<dbReference type="KEGG" id="dge:Dgeo_1122"/>
<dbReference type="eggNOG" id="COG0173">
    <property type="taxonomic scope" value="Bacteria"/>
</dbReference>
<dbReference type="HOGENOM" id="CLU_014330_3_2_0"/>
<dbReference type="Proteomes" id="UP000002431">
    <property type="component" value="Chromosome"/>
</dbReference>
<dbReference type="GO" id="GO:0005737">
    <property type="term" value="C:cytoplasm"/>
    <property type="evidence" value="ECO:0007669"/>
    <property type="project" value="UniProtKB-SubCell"/>
</dbReference>
<dbReference type="GO" id="GO:0004815">
    <property type="term" value="F:aspartate-tRNA ligase activity"/>
    <property type="evidence" value="ECO:0007669"/>
    <property type="project" value="UniProtKB-UniRule"/>
</dbReference>
<dbReference type="GO" id="GO:0005524">
    <property type="term" value="F:ATP binding"/>
    <property type="evidence" value="ECO:0007669"/>
    <property type="project" value="UniProtKB-UniRule"/>
</dbReference>
<dbReference type="GO" id="GO:0003676">
    <property type="term" value="F:nucleic acid binding"/>
    <property type="evidence" value="ECO:0007669"/>
    <property type="project" value="InterPro"/>
</dbReference>
<dbReference type="GO" id="GO:0006422">
    <property type="term" value="P:aspartyl-tRNA aminoacylation"/>
    <property type="evidence" value="ECO:0007669"/>
    <property type="project" value="UniProtKB-UniRule"/>
</dbReference>
<dbReference type="CDD" id="cd00777">
    <property type="entry name" value="AspRS_core"/>
    <property type="match status" value="1"/>
</dbReference>
<dbReference type="CDD" id="cd04317">
    <property type="entry name" value="EcAspRS_like_N"/>
    <property type="match status" value="1"/>
</dbReference>
<dbReference type="Gene3D" id="3.30.930.10">
    <property type="entry name" value="Bira Bifunctional Protein, Domain 2"/>
    <property type="match status" value="1"/>
</dbReference>
<dbReference type="Gene3D" id="3.30.1360.30">
    <property type="entry name" value="GAD-like domain"/>
    <property type="match status" value="1"/>
</dbReference>
<dbReference type="Gene3D" id="2.40.50.140">
    <property type="entry name" value="Nucleic acid-binding proteins"/>
    <property type="match status" value="1"/>
</dbReference>
<dbReference type="HAMAP" id="MF_00044">
    <property type="entry name" value="Asp_tRNA_synth_type1"/>
    <property type="match status" value="1"/>
</dbReference>
<dbReference type="InterPro" id="IPR004364">
    <property type="entry name" value="Aa-tRNA-synt_II"/>
</dbReference>
<dbReference type="InterPro" id="IPR006195">
    <property type="entry name" value="aa-tRNA-synth_II"/>
</dbReference>
<dbReference type="InterPro" id="IPR045864">
    <property type="entry name" value="aa-tRNA-synth_II/BPL/LPL"/>
</dbReference>
<dbReference type="InterPro" id="IPR004524">
    <property type="entry name" value="Asp-tRNA-ligase_1"/>
</dbReference>
<dbReference type="InterPro" id="IPR047089">
    <property type="entry name" value="Asp-tRNA-ligase_1_N"/>
</dbReference>
<dbReference type="InterPro" id="IPR002312">
    <property type="entry name" value="Asp/Asn-tRNA-synth_IIb"/>
</dbReference>
<dbReference type="InterPro" id="IPR047090">
    <property type="entry name" value="AspRS_core"/>
</dbReference>
<dbReference type="InterPro" id="IPR004115">
    <property type="entry name" value="GAD-like_sf"/>
</dbReference>
<dbReference type="InterPro" id="IPR029351">
    <property type="entry name" value="GAD_dom"/>
</dbReference>
<dbReference type="InterPro" id="IPR012340">
    <property type="entry name" value="NA-bd_OB-fold"/>
</dbReference>
<dbReference type="InterPro" id="IPR004365">
    <property type="entry name" value="NA-bd_OB_tRNA"/>
</dbReference>
<dbReference type="NCBIfam" id="TIGR00459">
    <property type="entry name" value="aspS_bact"/>
    <property type="match status" value="1"/>
</dbReference>
<dbReference type="NCBIfam" id="NF001750">
    <property type="entry name" value="PRK00476.1"/>
    <property type="match status" value="1"/>
</dbReference>
<dbReference type="PANTHER" id="PTHR22594:SF5">
    <property type="entry name" value="ASPARTATE--TRNA LIGASE, MITOCHONDRIAL"/>
    <property type="match status" value="1"/>
</dbReference>
<dbReference type="PANTHER" id="PTHR22594">
    <property type="entry name" value="ASPARTYL/LYSYL-TRNA SYNTHETASE"/>
    <property type="match status" value="1"/>
</dbReference>
<dbReference type="Pfam" id="PF02938">
    <property type="entry name" value="GAD"/>
    <property type="match status" value="1"/>
</dbReference>
<dbReference type="Pfam" id="PF00152">
    <property type="entry name" value="tRNA-synt_2"/>
    <property type="match status" value="1"/>
</dbReference>
<dbReference type="Pfam" id="PF01336">
    <property type="entry name" value="tRNA_anti-codon"/>
    <property type="match status" value="1"/>
</dbReference>
<dbReference type="PRINTS" id="PR01042">
    <property type="entry name" value="TRNASYNTHASP"/>
</dbReference>
<dbReference type="SUPFAM" id="SSF55681">
    <property type="entry name" value="Class II aaRS and biotin synthetases"/>
    <property type="match status" value="1"/>
</dbReference>
<dbReference type="SUPFAM" id="SSF55261">
    <property type="entry name" value="GAD domain-like"/>
    <property type="match status" value="1"/>
</dbReference>
<dbReference type="SUPFAM" id="SSF50249">
    <property type="entry name" value="Nucleic acid-binding proteins"/>
    <property type="match status" value="1"/>
</dbReference>
<dbReference type="PROSITE" id="PS50862">
    <property type="entry name" value="AA_TRNA_LIGASE_II"/>
    <property type="match status" value="1"/>
</dbReference>
<gene>
    <name evidence="1" type="primary">aspS</name>
    <name type="ordered locus">Dgeo_1122</name>
</gene>
<evidence type="ECO:0000255" key="1">
    <source>
        <dbReference type="HAMAP-Rule" id="MF_00044"/>
    </source>
</evidence>
<reference key="1">
    <citation type="submission" date="2006-04" db="EMBL/GenBank/DDBJ databases">
        <title>Complete sequence of chromosome of Deinococcus geothermalis DSM 11300.</title>
        <authorList>
            <person name="Copeland A."/>
            <person name="Lucas S."/>
            <person name="Lapidus A."/>
            <person name="Barry K."/>
            <person name="Detter J.C."/>
            <person name="Glavina del Rio T."/>
            <person name="Hammon N."/>
            <person name="Israni S."/>
            <person name="Dalin E."/>
            <person name="Tice H."/>
            <person name="Pitluck S."/>
            <person name="Brettin T."/>
            <person name="Bruce D."/>
            <person name="Han C."/>
            <person name="Tapia R."/>
            <person name="Saunders E."/>
            <person name="Gilna P."/>
            <person name="Schmutz J."/>
            <person name="Larimer F."/>
            <person name="Land M."/>
            <person name="Hauser L."/>
            <person name="Kyrpides N."/>
            <person name="Kim E."/>
            <person name="Daly M.J."/>
            <person name="Fredrickson J.K."/>
            <person name="Makarova K.S."/>
            <person name="Gaidamakova E.K."/>
            <person name="Zhai M."/>
            <person name="Richardson P."/>
        </authorList>
    </citation>
    <scope>NUCLEOTIDE SEQUENCE [LARGE SCALE GENOMIC DNA]</scope>
    <source>
        <strain>DSM 11300 / CIP 105573 / AG-3a</strain>
    </source>
</reference>
<organism>
    <name type="scientific">Deinococcus geothermalis (strain DSM 11300 / CIP 105573 / AG-3a)</name>
    <dbReference type="NCBI Taxonomy" id="319795"/>
    <lineage>
        <taxon>Bacteria</taxon>
        <taxon>Thermotogati</taxon>
        <taxon>Deinococcota</taxon>
        <taxon>Deinococci</taxon>
        <taxon>Deinococcales</taxon>
        <taxon>Deinococcaceae</taxon>
        <taxon>Deinococcus</taxon>
    </lineage>
</organism>
<keyword id="KW-0030">Aminoacyl-tRNA synthetase</keyword>
<keyword id="KW-0067">ATP-binding</keyword>
<keyword id="KW-0963">Cytoplasm</keyword>
<keyword id="KW-0436">Ligase</keyword>
<keyword id="KW-0547">Nucleotide-binding</keyword>
<keyword id="KW-0648">Protein biosynthesis</keyword>
<name>SYD_DEIGD</name>
<feature type="chain" id="PRO_1000006669" description="Aspartate--tRNA ligase">
    <location>
        <begin position="1"/>
        <end position="577"/>
    </location>
</feature>
<feature type="region of interest" description="Aspartate" evidence="1">
    <location>
        <begin position="195"/>
        <end position="198"/>
    </location>
</feature>
<feature type="binding site" evidence="1">
    <location>
        <position position="171"/>
    </location>
    <ligand>
        <name>L-aspartate</name>
        <dbReference type="ChEBI" id="CHEBI:29991"/>
    </ligand>
</feature>
<feature type="binding site" evidence="1">
    <location>
        <begin position="217"/>
        <end position="219"/>
    </location>
    <ligand>
        <name>ATP</name>
        <dbReference type="ChEBI" id="CHEBI:30616"/>
    </ligand>
</feature>
<feature type="binding site" evidence="1">
    <location>
        <position position="217"/>
    </location>
    <ligand>
        <name>L-aspartate</name>
        <dbReference type="ChEBI" id="CHEBI:29991"/>
    </ligand>
</feature>
<feature type="binding site" evidence="1">
    <location>
        <position position="226"/>
    </location>
    <ligand>
        <name>ATP</name>
        <dbReference type="ChEBI" id="CHEBI:30616"/>
    </ligand>
</feature>
<feature type="binding site" evidence="1">
    <location>
        <position position="437"/>
    </location>
    <ligand>
        <name>L-aspartate</name>
        <dbReference type="ChEBI" id="CHEBI:29991"/>
    </ligand>
</feature>
<feature type="binding site" evidence="1">
    <location>
        <position position="472"/>
    </location>
    <ligand>
        <name>ATP</name>
        <dbReference type="ChEBI" id="CHEBI:30616"/>
    </ligand>
</feature>
<feature type="binding site" evidence="1">
    <location>
        <position position="479"/>
    </location>
    <ligand>
        <name>L-aspartate</name>
        <dbReference type="ChEBI" id="CHEBI:29991"/>
    </ligand>
</feature>
<feature type="binding site" evidence="1">
    <location>
        <begin position="524"/>
        <end position="527"/>
    </location>
    <ligand>
        <name>ATP</name>
        <dbReference type="ChEBI" id="CHEBI:30616"/>
    </ligand>
</feature>
<accession>Q1IZB4</accession>